<keyword id="KW-0028">Amino-acid biosynthesis</keyword>
<keyword id="KW-0100">Branched-chain amino acid biosynthesis</keyword>
<keyword id="KW-0963">Cytoplasm</keyword>
<keyword id="KW-0432">Leucine biosynthesis</keyword>
<keyword id="KW-0460">Magnesium</keyword>
<keyword id="KW-0464">Manganese</keyword>
<keyword id="KW-0479">Metal-binding</keyword>
<keyword id="KW-0520">NAD</keyword>
<keyword id="KW-0560">Oxidoreductase</keyword>
<protein>
    <recommendedName>
        <fullName evidence="1">3-isopropylmalate dehydrogenase</fullName>
        <ecNumber evidence="1">1.1.1.85</ecNumber>
    </recommendedName>
    <alternativeName>
        <fullName evidence="1">3-IPM-DH</fullName>
    </alternativeName>
    <alternativeName>
        <fullName evidence="1">Beta-IPM dehydrogenase</fullName>
        <shortName evidence="1">IMDH</shortName>
    </alternativeName>
</protein>
<sequence>MSVPSSAVRTYRITALAGDGIGPEIMQVGRAVLDAVAAQVGFSLQWQEGLIGGAAYEATGDPLPPETLKMAQESDAVYLAAVGDFKYDTLPREKRPERALLGLRAGLGLFANLRPVKIFPQLVQASSLKPEVVAGIDLVVVRELTGGIYFGQPKGIFTDAKGSRRGVNTMAYSEAEVDRIARVAFELARKRRRKLCSVDKANVLEVSQLWRERVTAIAAEYPDVELSHLYVDNAAMQLVRWPKQFDVILTENLFGDILSDEAAMLTGSIGMLPSASLGSSGPGVYEPVHGSAPDIAGQDKANPIAQVLSGAMLLRYSLDQPQAADRIEQAVEAVLAQGYRTADIYSEGMTLVGCREMGEKILAALAQQQASPQGSLSAPGG</sequence>
<feature type="chain" id="PRO_0000250145" description="3-isopropylmalate dehydrogenase">
    <location>
        <begin position="1"/>
        <end position="381"/>
    </location>
</feature>
<feature type="binding site" evidence="1">
    <location>
        <position position="104"/>
    </location>
    <ligand>
        <name>substrate</name>
    </ligand>
</feature>
<feature type="binding site" evidence="1">
    <location>
        <position position="114"/>
    </location>
    <ligand>
        <name>substrate</name>
    </ligand>
</feature>
<feature type="binding site" evidence="1">
    <location>
        <position position="142"/>
    </location>
    <ligand>
        <name>substrate</name>
    </ligand>
</feature>
<feature type="binding site" evidence="1">
    <location>
        <position position="232"/>
    </location>
    <ligand>
        <name>Mg(2+)</name>
        <dbReference type="ChEBI" id="CHEBI:18420"/>
    </ligand>
</feature>
<feature type="binding site" evidence="1">
    <location>
        <position position="232"/>
    </location>
    <ligand>
        <name>substrate</name>
    </ligand>
</feature>
<feature type="binding site" evidence="1">
    <location>
        <position position="256"/>
    </location>
    <ligand>
        <name>Mg(2+)</name>
        <dbReference type="ChEBI" id="CHEBI:18420"/>
    </ligand>
</feature>
<feature type="binding site" evidence="1">
    <location>
        <position position="260"/>
    </location>
    <ligand>
        <name>Mg(2+)</name>
        <dbReference type="ChEBI" id="CHEBI:18420"/>
    </ligand>
</feature>
<feature type="binding site" evidence="1">
    <location>
        <begin position="290"/>
        <end position="302"/>
    </location>
    <ligand>
        <name>NAD(+)</name>
        <dbReference type="ChEBI" id="CHEBI:57540"/>
    </ligand>
</feature>
<feature type="site" description="Important for catalysis" evidence="1">
    <location>
        <position position="149"/>
    </location>
</feature>
<feature type="site" description="Important for catalysis" evidence="1">
    <location>
        <position position="200"/>
    </location>
</feature>
<dbReference type="EC" id="1.1.1.85" evidence="1"/>
<dbReference type="EMBL" id="CP000239">
    <property type="protein sequence ID" value="ABC99951.1"/>
    <property type="molecule type" value="Genomic_DNA"/>
</dbReference>
<dbReference type="RefSeq" id="WP_011430627.1">
    <property type="nucleotide sequence ID" value="NC_007775.1"/>
</dbReference>
<dbReference type="SMR" id="Q2JTN8"/>
<dbReference type="STRING" id="321327.CYA_1798"/>
<dbReference type="KEGG" id="cya:CYA_1798"/>
<dbReference type="eggNOG" id="COG0473">
    <property type="taxonomic scope" value="Bacteria"/>
</dbReference>
<dbReference type="HOGENOM" id="CLU_031953_0_3_3"/>
<dbReference type="OrthoDB" id="9806254at2"/>
<dbReference type="UniPathway" id="UPA00048">
    <property type="reaction ID" value="UER00072"/>
</dbReference>
<dbReference type="Proteomes" id="UP000008818">
    <property type="component" value="Chromosome"/>
</dbReference>
<dbReference type="GO" id="GO:0005829">
    <property type="term" value="C:cytosol"/>
    <property type="evidence" value="ECO:0007669"/>
    <property type="project" value="TreeGrafter"/>
</dbReference>
<dbReference type="GO" id="GO:0003862">
    <property type="term" value="F:3-isopropylmalate dehydrogenase activity"/>
    <property type="evidence" value="ECO:0007669"/>
    <property type="project" value="UniProtKB-UniRule"/>
</dbReference>
<dbReference type="GO" id="GO:0000287">
    <property type="term" value="F:magnesium ion binding"/>
    <property type="evidence" value="ECO:0007669"/>
    <property type="project" value="InterPro"/>
</dbReference>
<dbReference type="GO" id="GO:0051287">
    <property type="term" value="F:NAD binding"/>
    <property type="evidence" value="ECO:0007669"/>
    <property type="project" value="InterPro"/>
</dbReference>
<dbReference type="GO" id="GO:0009098">
    <property type="term" value="P:L-leucine biosynthetic process"/>
    <property type="evidence" value="ECO:0007669"/>
    <property type="project" value="UniProtKB-UniRule"/>
</dbReference>
<dbReference type="FunFam" id="3.40.718.10:FF:000028">
    <property type="entry name" value="3-isopropylmalate dehydrogenase"/>
    <property type="match status" value="1"/>
</dbReference>
<dbReference type="Gene3D" id="3.40.718.10">
    <property type="entry name" value="Isopropylmalate Dehydrogenase"/>
    <property type="match status" value="1"/>
</dbReference>
<dbReference type="HAMAP" id="MF_01033">
    <property type="entry name" value="LeuB_type1"/>
    <property type="match status" value="1"/>
</dbReference>
<dbReference type="InterPro" id="IPR019818">
    <property type="entry name" value="IsoCit/isopropylmalate_DH_CS"/>
</dbReference>
<dbReference type="InterPro" id="IPR024084">
    <property type="entry name" value="IsoPropMal-DH-like_dom"/>
</dbReference>
<dbReference type="InterPro" id="IPR004429">
    <property type="entry name" value="Isopropylmalate_DH"/>
</dbReference>
<dbReference type="NCBIfam" id="TIGR00169">
    <property type="entry name" value="leuB"/>
    <property type="match status" value="1"/>
</dbReference>
<dbReference type="PANTHER" id="PTHR42979">
    <property type="entry name" value="3-ISOPROPYLMALATE DEHYDROGENASE"/>
    <property type="match status" value="1"/>
</dbReference>
<dbReference type="PANTHER" id="PTHR42979:SF1">
    <property type="entry name" value="3-ISOPROPYLMALATE DEHYDROGENASE"/>
    <property type="match status" value="1"/>
</dbReference>
<dbReference type="Pfam" id="PF00180">
    <property type="entry name" value="Iso_dh"/>
    <property type="match status" value="1"/>
</dbReference>
<dbReference type="SMART" id="SM01329">
    <property type="entry name" value="Iso_dh"/>
    <property type="match status" value="1"/>
</dbReference>
<dbReference type="SUPFAM" id="SSF53659">
    <property type="entry name" value="Isocitrate/Isopropylmalate dehydrogenase-like"/>
    <property type="match status" value="1"/>
</dbReference>
<dbReference type="PROSITE" id="PS00470">
    <property type="entry name" value="IDH_IMDH"/>
    <property type="match status" value="1"/>
</dbReference>
<proteinExistence type="inferred from homology"/>
<evidence type="ECO:0000255" key="1">
    <source>
        <dbReference type="HAMAP-Rule" id="MF_01033"/>
    </source>
</evidence>
<name>LEU3_SYNJA</name>
<gene>
    <name evidence="1" type="primary">leuB</name>
    <name type="ordered locus">CYA_1798</name>
</gene>
<comment type="function">
    <text evidence="1">Catalyzes the oxidation of 3-carboxy-2-hydroxy-4-methylpentanoate (3-isopropylmalate) to 3-carboxy-4-methyl-2-oxopentanoate. The product decarboxylates to 4-methyl-2 oxopentanoate.</text>
</comment>
<comment type="catalytic activity">
    <reaction evidence="1">
        <text>(2R,3S)-3-isopropylmalate + NAD(+) = 4-methyl-2-oxopentanoate + CO2 + NADH</text>
        <dbReference type="Rhea" id="RHEA:32271"/>
        <dbReference type="ChEBI" id="CHEBI:16526"/>
        <dbReference type="ChEBI" id="CHEBI:17865"/>
        <dbReference type="ChEBI" id="CHEBI:35121"/>
        <dbReference type="ChEBI" id="CHEBI:57540"/>
        <dbReference type="ChEBI" id="CHEBI:57945"/>
        <dbReference type="EC" id="1.1.1.85"/>
    </reaction>
</comment>
<comment type="cofactor">
    <cofactor evidence="1">
        <name>Mg(2+)</name>
        <dbReference type="ChEBI" id="CHEBI:18420"/>
    </cofactor>
    <cofactor evidence="1">
        <name>Mn(2+)</name>
        <dbReference type="ChEBI" id="CHEBI:29035"/>
    </cofactor>
    <text evidence="1">Binds 1 Mg(2+) or Mn(2+) ion per subunit.</text>
</comment>
<comment type="pathway">
    <text evidence="1">Amino-acid biosynthesis; L-leucine biosynthesis; L-leucine from 3-methyl-2-oxobutanoate: step 3/4.</text>
</comment>
<comment type="subunit">
    <text evidence="1">Homodimer.</text>
</comment>
<comment type="subcellular location">
    <subcellularLocation>
        <location evidence="1">Cytoplasm</location>
    </subcellularLocation>
</comment>
<comment type="similarity">
    <text evidence="1">Belongs to the isocitrate and isopropylmalate dehydrogenases family. LeuB type 1 subfamily.</text>
</comment>
<organism>
    <name type="scientific">Synechococcus sp. (strain JA-3-3Ab)</name>
    <name type="common">Cyanobacteria bacterium Yellowstone A-Prime</name>
    <dbReference type="NCBI Taxonomy" id="321327"/>
    <lineage>
        <taxon>Bacteria</taxon>
        <taxon>Bacillati</taxon>
        <taxon>Cyanobacteriota</taxon>
        <taxon>Cyanophyceae</taxon>
        <taxon>Synechococcales</taxon>
        <taxon>Synechococcaceae</taxon>
        <taxon>Synechococcus</taxon>
    </lineage>
</organism>
<accession>Q2JTN8</accession>
<reference key="1">
    <citation type="journal article" date="2007" name="ISME J.">
        <title>Population level functional diversity in a microbial community revealed by comparative genomic and metagenomic analyses.</title>
        <authorList>
            <person name="Bhaya D."/>
            <person name="Grossman A.R."/>
            <person name="Steunou A.-S."/>
            <person name="Khuri N."/>
            <person name="Cohan F.M."/>
            <person name="Hamamura N."/>
            <person name="Melendrez M.C."/>
            <person name="Bateson M.M."/>
            <person name="Ward D.M."/>
            <person name="Heidelberg J.F."/>
        </authorList>
    </citation>
    <scope>NUCLEOTIDE SEQUENCE [LARGE SCALE GENOMIC DNA]</scope>
    <source>
        <strain>JA-3-3Ab</strain>
    </source>
</reference>